<evidence type="ECO:0000255" key="1">
    <source>
        <dbReference type="HAMAP-Rule" id="MF_00238"/>
    </source>
</evidence>
<protein>
    <recommendedName>
        <fullName evidence="1">Cytidylate kinase</fullName>
        <shortName evidence="1">CK</shortName>
        <ecNumber evidence="1">2.7.4.25</ecNumber>
    </recommendedName>
    <alternativeName>
        <fullName evidence="1">Cytidine monophosphate kinase</fullName>
        <shortName evidence="1">CMP kinase</shortName>
    </alternativeName>
</protein>
<organism>
    <name type="scientific">Clostridium perfringens (strain 13 / Type A)</name>
    <dbReference type="NCBI Taxonomy" id="195102"/>
    <lineage>
        <taxon>Bacteria</taxon>
        <taxon>Bacillati</taxon>
        <taxon>Bacillota</taxon>
        <taxon>Clostridia</taxon>
        <taxon>Eubacteriales</taxon>
        <taxon>Clostridiaceae</taxon>
        <taxon>Clostridium</taxon>
    </lineage>
</organism>
<proteinExistence type="inferred from homology"/>
<keyword id="KW-0067">ATP-binding</keyword>
<keyword id="KW-0963">Cytoplasm</keyword>
<keyword id="KW-0418">Kinase</keyword>
<keyword id="KW-0547">Nucleotide-binding</keyword>
<keyword id="KW-1185">Reference proteome</keyword>
<keyword id="KW-0808">Transferase</keyword>
<accession>Q8XLF7</accession>
<name>KCY_CLOPE</name>
<reference key="1">
    <citation type="journal article" date="2002" name="Proc. Natl. Acad. Sci. U.S.A.">
        <title>Complete genome sequence of Clostridium perfringens, an anaerobic flesh-eater.</title>
        <authorList>
            <person name="Shimizu T."/>
            <person name="Ohtani K."/>
            <person name="Hirakawa H."/>
            <person name="Ohshima K."/>
            <person name="Yamashita A."/>
            <person name="Shiba T."/>
            <person name="Ogasawara N."/>
            <person name="Hattori M."/>
            <person name="Kuhara S."/>
            <person name="Hayashi H."/>
        </authorList>
    </citation>
    <scope>NUCLEOTIDE SEQUENCE [LARGE SCALE GENOMIC DNA]</scope>
    <source>
        <strain>13 / Type A</strain>
    </source>
</reference>
<feature type="chain" id="PRO_0000131905" description="Cytidylate kinase">
    <location>
        <begin position="1"/>
        <end position="217"/>
    </location>
</feature>
<feature type="binding site" evidence="1">
    <location>
        <begin position="11"/>
        <end position="19"/>
    </location>
    <ligand>
        <name>ATP</name>
        <dbReference type="ChEBI" id="CHEBI:30616"/>
    </ligand>
</feature>
<sequence length="217" mass="24424">MNKLITVAIDGPAGAGKSTIAKIIGEKFNLMYINTGSMYRAVTLKALENNISAEEVDKLLVMIDGMDMHFENDELILNGENINSLITMPNISKNVSAYASIREVRERLVNLMRKMALKYSVIMDGRDIGTVVLKDANFKFFLTASPEERADRRYKELMGKGVEVNYDEILQDIIKRDYLDSNREVDPLRKAEDAIEIDTTGIGIMGVVEKISSYMEK</sequence>
<dbReference type="EC" id="2.7.4.25" evidence="1"/>
<dbReference type="EMBL" id="BA000016">
    <property type="protein sequence ID" value="BAB80790.1"/>
    <property type="molecule type" value="Genomic_DNA"/>
</dbReference>
<dbReference type="RefSeq" id="WP_003460731.1">
    <property type="nucleotide sequence ID" value="NC_003366.1"/>
</dbReference>
<dbReference type="SMR" id="Q8XLF7"/>
<dbReference type="STRING" id="195102.gene:10490347"/>
<dbReference type="GeneID" id="93002347"/>
<dbReference type="KEGG" id="cpe:CPE1084"/>
<dbReference type="HOGENOM" id="CLU_079959_0_2_9"/>
<dbReference type="Proteomes" id="UP000000818">
    <property type="component" value="Chromosome"/>
</dbReference>
<dbReference type="GO" id="GO:0005829">
    <property type="term" value="C:cytosol"/>
    <property type="evidence" value="ECO:0007669"/>
    <property type="project" value="TreeGrafter"/>
</dbReference>
<dbReference type="GO" id="GO:0005524">
    <property type="term" value="F:ATP binding"/>
    <property type="evidence" value="ECO:0007669"/>
    <property type="project" value="UniProtKB-UniRule"/>
</dbReference>
<dbReference type="GO" id="GO:0036430">
    <property type="term" value="F:CMP kinase activity"/>
    <property type="evidence" value="ECO:0007669"/>
    <property type="project" value="RHEA"/>
</dbReference>
<dbReference type="GO" id="GO:0036431">
    <property type="term" value="F:dCMP kinase activity"/>
    <property type="evidence" value="ECO:0007669"/>
    <property type="project" value="RHEA"/>
</dbReference>
<dbReference type="GO" id="GO:0015949">
    <property type="term" value="P:nucleobase-containing small molecule interconversion"/>
    <property type="evidence" value="ECO:0007669"/>
    <property type="project" value="TreeGrafter"/>
</dbReference>
<dbReference type="GO" id="GO:0006220">
    <property type="term" value="P:pyrimidine nucleotide metabolic process"/>
    <property type="evidence" value="ECO:0007669"/>
    <property type="project" value="UniProtKB-UniRule"/>
</dbReference>
<dbReference type="CDD" id="cd02020">
    <property type="entry name" value="CMPK"/>
    <property type="match status" value="1"/>
</dbReference>
<dbReference type="Gene3D" id="3.40.50.300">
    <property type="entry name" value="P-loop containing nucleotide triphosphate hydrolases"/>
    <property type="match status" value="1"/>
</dbReference>
<dbReference type="HAMAP" id="MF_00238">
    <property type="entry name" value="Cytidyl_kinase_type1"/>
    <property type="match status" value="1"/>
</dbReference>
<dbReference type="InterPro" id="IPR003136">
    <property type="entry name" value="Cytidylate_kin"/>
</dbReference>
<dbReference type="InterPro" id="IPR011994">
    <property type="entry name" value="Cytidylate_kinase_dom"/>
</dbReference>
<dbReference type="InterPro" id="IPR027417">
    <property type="entry name" value="P-loop_NTPase"/>
</dbReference>
<dbReference type="NCBIfam" id="TIGR00017">
    <property type="entry name" value="cmk"/>
    <property type="match status" value="1"/>
</dbReference>
<dbReference type="PANTHER" id="PTHR21299:SF2">
    <property type="entry name" value="CYTIDYLATE KINASE"/>
    <property type="match status" value="1"/>
</dbReference>
<dbReference type="PANTHER" id="PTHR21299">
    <property type="entry name" value="CYTIDYLATE KINASE/PANTOATE-BETA-ALANINE LIGASE"/>
    <property type="match status" value="1"/>
</dbReference>
<dbReference type="Pfam" id="PF02224">
    <property type="entry name" value="Cytidylate_kin"/>
    <property type="match status" value="1"/>
</dbReference>
<dbReference type="SUPFAM" id="SSF52540">
    <property type="entry name" value="P-loop containing nucleoside triphosphate hydrolases"/>
    <property type="match status" value="1"/>
</dbReference>
<comment type="catalytic activity">
    <reaction evidence="1">
        <text>CMP + ATP = CDP + ADP</text>
        <dbReference type="Rhea" id="RHEA:11600"/>
        <dbReference type="ChEBI" id="CHEBI:30616"/>
        <dbReference type="ChEBI" id="CHEBI:58069"/>
        <dbReference type="ChEBI" id="CHEBI:60377"/>
        <dbReference type="ChEBI" id="CHEBI:456216"/>
        <dbReference type="EC" id="2.7.4.25"/>
    </reaction>
</comment>
<comment type="catalytic activity">
    <reaction evidence="1">
        <text>dCMP + ATP = dCDP + ADP</text>
        <dbReference type="Rhea" id="RHEA:25094"/>
        <dbReference type="ChEBI" id="CHEBI:30616"/>
        <dbReference type="ChEBI" id="CHEBI:57566"/>
        <dbReference type="ChEBI" id="CHEBI:58593"/>
        <dbReference type="ChEBI" id="CHEBI:456216"/>
        <dbReference type="EC" id="2.7.4.25"/>
    </reaction>
</comment>
<comment type="subcellular location">
    <subcellularLocation>
        <location evidence="1">Cytoplasm</location>
    </subcellularLocation>
</comment>
<comment type="similarity">
    <text evidence="1">Belongs to the cytidylate kinase family. Type 1 subfamily.</text>
</comment>
<gene>
    <name evidence="1" type="primary">cmk</name>
    <name type="ordered locus">CPE1084</name>
</gene>